<gene>
    <name evidence="1" type="primary">sprT</name>
    <name type="ordered locus">SEN2935</name>
</gene>
<proteinExistence type="inferred from homology"/>
<evidence type="ECO:0000255" key="1">
    <source>
        <dbReference type="HAMAP-Rule" id="MF_00746"/>
    </source>
</evidence>
<feature type="chain" id="PRO_1000133250" description="Protein SprT">
    <location>
        <begin position="1"/>
        <end position="165"/>
    </location>
</feature>
<feature type="domain" description="SprT-like" evidence="1">
    <location>
        <begin position="22"/>
        <end position="163"/>
    </location>
</feature>
<feature type="active site" evidence="1">
    <location>
        <position position="79"/>
    </location>
</feature>
<feature type="binding site" evidence="1">
    <location>
        <position position="78"/>
    </location>
    <ligand>
        <name>Zn(2+)</name>
        <dbReference type="ChEBI" id="CHEBI:29105"/>
    </ligand>
</feature>
<feature type="binding site" evidence="1">
    <location>
        <position position="82"/>
    </location>
    <ligand>
        <name>Zn(2+)</name>
        <dbReference type="ChEBI" id="CHEBI:29105"/>
    </ligand>
</feature>
<dbReference type="EMBL" id="AM933172">
    <property type="protein sequence ID" value="CAR34512.1"/>
    <property type="molecule type" value="Genomic_DNA"/>
</dbReference>
<dbReference type="RefSeq" id="WP_000856775.1">
    <property type="nucleotide sequence ID" value="NC_011294.1"/>
</dbReference>
<dbReference type="KEGG" id="set:SEN2935"/>
<dbReference type="HOGENOM" id="CLU_113336_0_1_6"/>
<dbReference type="Proteomes" id="UP000000613">
    <property type="component" value="Chromosome"/>
</dbReference>
<dbReference type="GO" id="GO:0005737">
    <property type="term" value="C:cytoplasm"/>
    <property type="evidence" value="ECO:0007669"/>
    <property type="project" value="UniProtKB-SubCell"/>
</dbReference>
<dbReference type="GO" id="GO:0008270">
    <property type="term" value="F:zinc ion binding"/>
    <property type="evidence" value="ECO:0007669"/>
    <property type="project" value="UniProtKB-UniRule"/>
</dbReference>
<dbReference type="GO" id="GO:0006950">
    <property type="term" value="P:response to stress"/>
    <property type="evidence" value="ECO:0007669"/>
    <property type="project" value="UniProtKB-ARBA"/>
</dbReference>
<dbReference type="HAMAP" id="MF_00746">
    <property type="entry name" value="SprT"/>
    <property type="match status" value="1"/>
</dbReference>
<dbReference type="InterPro" id="IPR006640">
    <property type="entry name" value="SprT-like_domain"/>
</dbReference>
<dbReference type="InterPro" id="IPR035240">
    <property type="entry name" value="SprT_Zn_ribbon"/>
</dbReference>
<dbReference type="InterPro" id="IPR023483">
    <property type="entry name" value="Uncharacterised_SprT"/>
</dbReference>
<dbReference type="NCBIfam" id="NF003421">
    <property type="entry name" value="PRK04860.1"/>
    <property type="match status" value="1"/>
</dbReference>
<dbReference type="PANTHER" id="PTHR38773">
    <property type="entry name" value="PROTEIN SPRT"/>
    <property type="match status" value="1"/>
</dbReference>
<dbReference type="PANTHER" id="PTHR38773:SF1">
    <property type="entry name" value="PROTEIN SPRT"/>
    <property type="match status" value="1"/>
</dbReference>
<dbReference type="Pfam" id="PF10263">
    <property type="entry name" value="SprT-like"/>
    <property type="match status" value="1"/>
</dbReference>
<dbReference type="Pfam" id="PF17283">
    <property type="entry name" value="Zn_ribbon_SprT"/>
    <property type="match status" value="1"/>
</dbReference>
<dbReference type="SMART" id="SM00731">
    <property type="entry name" value="SprT"/>
    <property type="match status" value="1"/>
</dbReference>
<dbReference type="PROSITE" id="PS00142">
    <property type="entry name" value="ZINC_PROTEASE"/>
    <property type="match status" value="1"/>
</dbReference>
<name>SPRT_SALEP</name>
<sequence>MKTPRLPIAIQQAVMRRLRENLAQANLKLDRHYPEPKLVYTQRGTSAGTAWLESYEIRLNPVLLLENIDTFIAEVVPHELAHLLVWKHFGRKAPHGKEWKWMMESVLGVPARRTHQFALQSVRRNTFPYHCQCQQHQLTVRRHNRVVRGEAVYRCVHCGEPLVAG</sequence>
<reference key="1">
    <citation type="journal article" date="2008" name="Genome Res.">
        <title>Comparative genome analysis of Salmonella enteritidis PT4 and Salmonella gallinarum 287/91 provides insights into evolutionary and host adaptation pathways.</title>
        <authorList>
            <person name="Thomson N.R."/>
            <person name="Clayton D.J."/>
            <person name="Windhorst D."/>
            <person name="Vernikos G."/>
            <person name="Davidson S."/>
            <person name="Churcher C."/>
            <person name="Quail M.A."/>
            <person name="Stevens M."/>
            <person name="Jones M.A."/>
            <person name="Watson M."/>
            <person name="Barron A."/>
            <person name="Layton A."/>
            <person name="Pickard D."/>
            <person name="Kingsley R.A."/>
            <person name="Bignell A."/>
            <person name="Clark L."/>
            <person name="Harris B."/>
            <person name="Ormond D."/>
            <person name="Abdellah Z."/>
            <person name="Brooks K."/>
            <person name="Cherevach I."/>
            <person name="Chillingworth T."/>
            <person name="Woodward J."/>
            <person name="Norberczak H."/>
            <person name="Lord A."/>
            <person name="Arrowsmith C."/>
            <person name="Jagels K."/>
            <person name="Moule S."/>
            <person name="Mungall K."/>
            <person name="Saunders M."/>
            <person name="Whitehead S."/>
            <person name="Chabalgoity J.A."/>
            <person name="Maskell D."/>
            <person name="Humphreys T."/>
            <person name="Roberts M."/>
            <person name="Barrow P.A."/>
            <person name="Dougan G."/>
            <person name="Parkhill J."/>
        </authorList>
    </citation>
    <scope>NUCLEOTIDE SEQUENCE [LARGE SCALE GENOMIC DNA]</scope>
    <source>
        <strain>P125109</strain>
    </source>
</reference>
<protein>
    <recommendedName>
        <fullName evidence="1">Protein SprT</fullName>
    </recommendedName>
</protein>
<comment type="cofactor">
    <cofactor evidence="1">
        <name>Zn(2+)</name>
        <dbReference type="ChEBI" id="CHEBI:29105"/>
    </cofactor>
    <text evidence="1">Binds 1 zinc ion.</text>
</comment>
<comment type="subcellular location">
    <subcellularLocation>
        <location evidence="1">Cytoplasm</location>
    </subcellularLocation>
</comment>
<comment type="similarity">
    <text evidence="1">Belongs to the SprT family.</text>
</comment>
<accession>B5QY68</accession>
<keyword id="KW-0963">Cytoplasm</keyword>
<keyword id="KW-0479">Metal-binding</keyword>
<keyword id="KW-0862">Zinc</keyword>
<organism>
    <name type="scientific">Salmonella enteritidis PT4 (strain P125109)</name>
    <dbReference type="NCBI Taxonomy" id="550537"/>
    <lineage>
        <taxon>Bacteria</taxon>
        <taxon>Pseudomonadati</taxon>
        <taxon>Pseudomonadota</taxon>
        <taxon>Gammaproteobacteria</taxon>
        <taxon>Enterobacterales</taxon>
        <taxon>Enterobacteriaceae</taxon>
        <taxon>Salmonella</taxon>
    </lineage>
</organism>